<sequence>MTHITLGQAIWASVRPIIKIYLIIGVGFGLCKMNILTVQATRSISDIVLTILLPCLSFNKIVANIEDNDIKDVGIICLTSVILFATGLGFAFIVRSVLPVPKRWRGGILAGGMFPNISDLPIAYLQSMDQGFIFTEAEGEKGVANVIIFLAMFLICVFNLGGFRLIENDFHYKGDDDEENTLTNDDSAQQPTQPIEGNSSSSSNQDILKEPNESTVPNSSQASYISEKNKKEKTELSVPKPTHTAPPAIDDRSSNSSAVVSIDSITHSLRTNHVDAQSVSELNDPTYRTRSQPIAYTTESRTSHVHNNRRNSITGSLRSIDMRELPAEGMSDLIREYSNVDQYGRRRKSSISSQGAPSVLQADGTISPNLTRTSTLQRVKTSNLTRIITSDATVSKKDIETSGSSLPKWLQKFPLTKFFVFFLKNCLRPCSMAVILALIIAFIPWVKALFVTTSNTPKIKQAPDNAPALTFIMDFTSYVGAASVPFGLILLGATLGRLKIGKLYPGFWKSAVVLVFLRQCIMPIFGVLWCDRLVKAGWLNWENDKMLLFVTAITWNLPTMTTLIYFTASYTPEDETEPVQMECTSFFLMLQYPLMVVSLPFLVSYFIKVQMKL</sequence>
<reference key="1">
    <citation type="journal article" date="1997" name="Yeast">
        <title>DNA sequencing and analysis of 130 kb from yeast chromosome XV.</title>
        <authorList>
            <person name="Voss H."/>
            <person name="Benes V."/>
            <person name="Andrade M.A."/>
            <person name="Valencia A."/>
            <person name="Rechmann S."/>
            <person name="Teodoru C."/>
            <person name="Schwager C."/>
            <person name="Paces V."/>
            <person name="Sander C."/>
            <person name="Ansorge W."/>
        </authorList>
    </citation>
    <scope>NUCLEOTIDE SEQUENCE [GENOMIC DNA]</scope>
</reference>
<reference key="2">
    <citation type="journal article" date="1997" name="Nature">
        <title>The nucleotide sequence of Saccharomyces cerevisiae chromosome XV.</title>
        <authorList>
            <person name="Dujon B."/>
            <person name="Albermann K."/>
            <person name="Aldea M."/>
            <person name="Alexandraki D."/>
            <person name="Ansorge W."/>
            <person name="Arino J."/>
            <person name="Benes V."/>
            <person name="Bohn C."/>
            <person name="Bolotin-Fukuhara M."/>
            <person name="Bordonne R."/>
            <person name="Boyer J."/>
            <person name="Camasses A."/>
            <person name="Casamayor A."/>
            <person name="Casas C."/>
            <person name="Cheret G."/>
            <person name="Cziepluch C."/>
            <person name="Daignan-Fornier B."/>
            <person name="Dang V.-D."/>
            <person name="de Haan M."/>
            <person name="Delius H."/>
            <person name="Durand P."/>
            <person name="Fairhead C."/>
            <person name="Feldmann H."/>
            <person name="Gaillon L."/>
            <person name="Galisson F."/>
            <person name="Gamo F.-J."/>
            <person name="Gancedo C."/>
            <person name="Goffeau A."/>
            <person name="Goulding S.E."/>
            <person name="Grivell L.A."/>
            <person name="Habbig B."/>
            <person name="Hand N.J."/>
            <person name="Hani J."/>
            <person name="Hattenhorst U."/>
            <person name="Hebling U."/>
            <person name="Hernando Y."/>
            <person name="Herrero E."/>
            <person name="Heumann K."/>
            <person name="Hiesel R."/>
            <person name="Hilger F."/>
            <person name="Hofmann B."/>
            <person name="Hollenberg C.P."/>
            <person name="Hughes B."/>
            <person name="Jauniaux J.-C."/>
            <person name="Kalogeropoulos A."/>
            <person name="Katsoulou C."/>
            <person name="Kordes E."/>
            <person name="Lafuente M.J."/>
            <person name="Landt O."/>
            <person name="Louis E.J."/>
            <person name="Maarse A.C."/>
            <person name="Madania A."/>
            <person name="Mannhaupt G."/>
            <person name="Marck C."/>
            <person name="Martin R.P."/>
            <person name="Mewes H.-W."/>
            <person name="Michaux G."/>
            <person name="Paces V."/>
            <person name="Parle-McDermott A.G."/>
            <person name="Pearson B.M."/>
            <person name="Perrin A."/>
            <person name="Pettersson B."/>
            <person name="Poch O."/>
            <person name="Pohl T.M."/>
            <person name="Poirey R."/>
            <person name="Portetelle D."/>
            <person name="Pujol A."/>
            <person name="Purnelle B."/>
            <person name="Ramezani Rad M."/>
            <person name="Rechmann S."/>
            <person name="Schwager C."/>
            <person name="Schweizer M."/>
            <person name="Sor F."/>
            <person name="Sterky F."/>
            <person name="Tarassov I.A."/>
            <person name="Teodoru C."/>
            <person name="Tettelin H."/>
            <person name="Thierry A."/>
            <person name="Tobiasch E."/>
            <person name="Tzermia M."/>
            <person name="Uhlen M."/>
            <person name="Unseld M."/>
            <person name="Valens M."/>
            <person name="Vandenbol M."/>
            <person name="Vetter I."/>
            <person name="Vlcek C."/>
            <person name="Voet M."/>
            <person name="Volckaert G."/>
            <person name="Voss H."/>
            <person name="Wambutt R."/>
            <person name="Wedler H."/>
            <person name="Wiemann S."/>
            <person name="Winsor B."/>
            <person name="Wolfe K.H."/>
            <person name="Zollner A."/>
            <person name="Zumstein E."/>
            <person name="Kleine K."/>
        </authorList>
    </citation>
    <scope>NUCLEOTIDE SEQUENCE [LARGE SCALE GENOMIC DNA]</scope>
    <source>
        <strain>ATCC 204508 / S288c</strain>
    </source>
</reference>
<reference key="3">
    <citation type="journal article" date="2014" name="G3 (Bethesda)">
        <title>The reference genome sequence of Saccharomyces cerevisiae: Then and now.</title>
        <authorList>
            <person name="Engel S.R."/>
            <person name="Dietrich F.S."/>
            <person name="Fisk D.G."/>
            <person name="Binkley G."/>
            <person name="Balakrishnan R."/>
            <person name="Costanzo M.C."/>
            <person name="Dwight S.S."/>
            <person name="Hitz B.C."/>
            <person name="Karra K."/>
            <person name="Nash R.S."/>
            <person name="Weng S."/>
            <person name="Wong E.D."/>
            <person name="Lloyd P."/>
            <person name="Skrzypek M.S."/>
            <person name="Miyasato S.R."/>
            <person name="Simison M."/>
            <person name="Cherry J.M."/>
        </authorList>
    </citation>
    <scope>GENOME REANNOTATION</scope>
    <source>
        <strain>ATCC 204508 / S288c</strain>
    </source>
</reference>
<reference key="4">
    <citation type="journal article" date="2007" name="Genome Res.">
        <title>Approaching a complete repository of sequence-verified protein-encoding clones for Saccharomyces cerevisiae.</title>
        <authorList>
            <person name="Hu Y."/>
            <person name="Rolfs A."/>
            <person name="Bhullar B."/>
            <person name="Murthy T.V.S."/>
            <person name="Zhu C."/>
            <person name="Berger M.F."/>
            <person name="Camargo A.A."/>
            <person name="Kelley F."/>
            <person name="McCarron S."/>
            <person name="Jepson D."/>
            <person name="Richardson A."/>
            <person name="Raphael J."/>
            <person name="Moreira D."/>
            <person name="Taycher E."/>
            <person name="Zuo D."/>
            <person name="Mohr S."/>
            <person name="Kane M.F."/>
            <person name="Williamson J."/>
            <person name="Simpson A.J.G."/>
            <person name="Bulyk M.L."/>
            <person name="Harlow E."/>
            <person name="Marsischky G."/>
            <person name="Kolodner R.D."/>
            <person name="LaBaer J."/>
        </authorList>
    </citation>
    <scope>NUCLEOTIDE SEQUENCE [GENOMIC DNA]</scope>
    <source>
        <strain>ATCC 204508 / S288c</strain>
    </source>
</reference>
<reference key="5">
    <citation type="journal article" date="1997" name="Genetics">
        <title>Large scale identification of genes involved in cell surface biosynthesis and architecture in Saccharomyces cerevisiae.</title>
        <authorList>
            <person name="Lussier M."/>
            <person name="White A.-M."/>
            <person name="Sheraton J."/>
            <person name="di Paolo T."/>
            <person name="Treadwell J."/>
            <person name="Southard S.B."/>
            <person name="Horenstein C.I."/>
            <person name="Chen-Weiner J."/>
            <person name="Ram A.F.J."/>
            <person name="Kapteyn J.C."/>
            <person name="Roemer T.W."/>
            <person name="Vo D.H."/>
            <person name="Bondoc D.C."/>
            <person name="Hall J."/>
            <person name="Zhong W.-W."/>
            <person name="Sdicu A.-M."/>
            <person name="Davies J."/>
            <person name="Klis F.M."/>
            <person name="Robbins P.W."/>
            <person name="Bussey H."/>
        </authorList>
    </citation>
    <scope>IDENTIFICATION</scope>
</reference>
<reference key="6">
    <citation type="journal article" date="2003" name="Nature">
        <title>Global analysis of protein localization in budding yeast.</title>
        <authorList>
            <person name="Huh W.-K."/>
            <person name="Falvo J.V."/>
            <person name="Gerke L.C."/>
            <person name="Carroll A.S."/>
            <person name="Howson R.W."/>
            <person name="Weissman J.S."/>
            <person name="O'Shea E.K."/>
        </authorList>
    </citation>
    <scope>SUBCELLULAR LOCATION [LARGE SCALE ANALYSIS]</scope>
</reference>
<reference key="7">
    <citation type="journal article" date="2008" name="Mol. Cell. Proteomics">
        <title>A multidimensional chromatography technology for in-depth phosphoproteome analysis.</title>
        <authorList>
            <person name="Albuquerque C.P."/>
            <person name="Smolka M.B."/>
            <person name="Payne S.H."/>
            <person name="Bafna V."/>
            <person name="Eng J."/>
            <person name="Zhou H."/>
        </authorList>
    </citation>
    <scope>IDENTIFICATION BY MASS SPECTROMETRY [LARGE SCALE ANALYSIS]</scope>
</reference>
<reference key="8">
    <citation type="journal article" date="2009" name="Science">
        <title>Global analysis of Cdk1 substrate phosphorylation sites provides insights into evolution.</title>
        <authorList>
            <person name="Holt L.J."/>
            <person name="Tuch B.B."/>
            <person name="Villen J."/>
            <person name="Johnson A.D."/>
            <person name="Gygi S.P."/>
            <person name="Morgan D.O."/>
        </authorList>
    </citation>
    <scope>PHOSPHORYLATION [LARGE SCALE ANALYSIS] AT SER-291 AND SER-338</scope>
    <scope>IDENTIFICATION BY MASS SPECTROMETRY [LARGE SCALE ANALYSIS]</scope>
</reference>
<gene>
    <name type="primary">ECM3</name>
    <name type="ordered locus">YOR092W</name>
    <name type="ORF">YOR3165W</name>
</gene>
<feature type="chain" id="PRO_0000086921" description="Protein ECM3">
    <location>
        <begin position="1"/>
        <end position="613"/>
    </location>
</feature>
<feature type="transmembrane region" description="Helical" evidence="1">
    <location>
        <begin position="10"/>
        <end position="30"/>
    </location>
</feature>
<feature type="transmembrane region" description="Helical" evidence="1">
    <location>
        <begin position="74"/>
        <end position="94"/>
    </location>
</feature>
<feature type="transmembrane region" description="Helical" evidence="1">
    <location>
        <begin position="106"/>
        <end position="126"/>
    </location>
</feature>
<feature type="transmembrane region" description="Helical" evidence="1">
    <location>
        <begin position="143"/>
        <end position="163"/>
    </location>
</feature>
<feature type="transmembrane region" description="Helical" evidence="1">
    <location>
        <begin position="432"/>
        <end position="452"/>
    </location>
</feature>
<feature type="transmembrane region" description="Helical" evidence="1">
    <location>
        <begin position="471"/>
        <end position="491"/>
    </location>
</feature>
<feature type="transmembrane region" description="Helical" evidence="1">
    <location>
        <begin position="546"/>
        <end position="566"/>
    </location>
</feature>
<feature type="transmembrane region" description="Helical" evidence="1">
    <location>
        <begin position="587"/>
        <end position="607"/>
    </location>
</feature>
<feature type="region of interest" description="Disordered" evidence="2">
    <location>
        <begin position="177"/>
        <end position="256"/>
    </location>
</feature>
<feature type="region of interest" description="Disordered" evidence="2">
    <location>
        <begin position="345"/>
        <end position="366"/>
    </location>
</feature>
<feature type="compositionally biased region" description="Polar residues" evidence="2">
    <location>
        <begin position="187"/>
        <end position="206"/>
    </location>
</feature>
<feature type="compositionally biased region" description="Polar residues" evidence="2">
    <location>
        <begin position="213"/>
        <end position="226"/>
    </location>
</feature>
<feature type="modified residue" description="Phosphoserine" evidence="4">
    <location>
        <position position="291"/>
    </location>
</feature>
<feature type="modified residue" description="Phosphoserine" evidence="4">
    <location>
        <position position="338"/>
    </location>
</feature>
<dbReference type="EMBL" id="X94335">
    <property type="protein sequence ID" value="CAA64014.1"/>
    <property type="molecule type" value="Genomic_DNA"/>
</dbReference>
<dbReference type="EMBL" id="Z75000">
    <property type="protein sequence ID" value="CAA99289.1"/>
    <property type="molecule type" value="Genomic_DNA"/>
</dbReference>
<dbReference type="EMBL" id="AY692826">
    <property type="protein sequence ID" value="AAT92845.1"/>
    <property type="molecule type" value="Genomic_DNA"/>
</dbReference>
<dbReference type="EMBL" id="BK006948">
    <property type="protein sequence ID" value="DAA10869.1"/>
    <property type="molecule type" value="Genomic_DNA"/>
</dbReference>
<dbReference type="PIR" id="S66977">
    <property type="entry name" value="S66977"/>
</dbReference>
<dbReference type="RefSeq" id="NP_014735.1">
    <property type="nucleotide sequence ID" value="NM_001183511.1"/>
</dbReference>
<dbReference type="BioGRID" id="34490">
    <property type="interactions" value="52"/>
</dbReference>
<dbReference type="DIP" id="DIP-9001N"/>
<dbReference type="FunCoup" id="Q99252">
    <property type="interactions" value="99"/>
</dbReference>
<dbReference type="IntAct" id="Q99252">
    <property type="interactions" value="1"/>
</dbReference>
<dbReference type="MINT" id="Q99252"/>
<dbReference type="STRING" id="4932.YOR092W"/>
<dbReference type="iPTMnet" id="Q99252"/>
<dbReference type="PaxDb" id="4932-YOR092W"/>
<dbReference type="PeptideAtlas" id="Q99252"/>
<dbReference type="EnsemblFungi" id="YOR092W_mRNA">
    <property type="protein sequence ID" value="YOR092W"/>
    <property type="gene ID" value="YOR092W"/>
</dbReference>
<dbReference type="GeneID" id="854259"/>
<dbReference type="KEGG" id="sce:YOR092W"/>
<dbReference type="AGR" id="SGD:S000005618"/>
<dbReference type="SGD" id="S000005618">
    <property type="gene designation" value="ECM3"/>
</dbReference>
<dbReference type="VEuPathDB" id="FungiDB:YOR092W"/>
<dbReference type="eggNOG" id="ENOG502QU6H">
    <property type="taxonomic scope" value="Eukaryota"/>
</dbReference>
<dbReference type="GeneTree" id="ENSGT00940000176363"/>
<dbReference type="HOGENOM" id="CLU_021924_0_0_1"/>
<dbReference type="InParanoid" id="Q99252"/>
<dbReference type="OMA" id="MTHITLG"/>
<dbReference type="OrthoDB" id="435607at2759"/>
<dbReference type="BioCyc" id="YEAST:G3O-33626-MONOMER"/>
<dbReference type="BioGRID-ORCS" id="854259">
    <property type="hits" value="0 hits in 10 CRISPR screens"/>
</dbReference>
<dbReference type="PRO" id="PR:Q99252"/>
<dbReference type="Proteomes" id="UP000002311">
    <property type="component" value="Chromosome XV"/>
</dbReference>
<dbReference type="RNAct" id="Q99252">
    <property type="molecule type" value="protein"/>
</dbReference>
<dbReference type="GO" id="GO:0005737">
    <property type="term" value="C:cytoplasm"/>
    <property type="evidence" value="ECO:0007005"/>
    <property type="project" value="SGD"/>
</dbReference>
<dbReference type="GO" id="GO:0005783">
    <property type="term" value="C:endoplasmic reticulum"/>
    <property type="evidence" value="ECO:0007005"/>
    <property type="project" value="SGD"/>
</dbReference>
<dbReference type="GO" id="GO:0005789">
    <property type="term" value="C:endoplasmic reticulum membrane"/>
    <property type="evidence" value="ECO:0007669"/>
    <property type="project" value="UniProtKB-SubCell"/>
</dbReference>
<dbReference type="GO" id="GO:0071555">
    <property type="term" value="P:cell wall organization"/>
    <property type="evidence" value="ECO:0007669"/>
    <property type="project" value="UniProtKB-KW"/>
</dbReference>
<dbReference type="GO" id="GO:0055085">
    <property type="term" value="P:transmembrane transport"/>
    <property type="evidence" value="ECO:0007669"/>
    <property type="project" value="InterPro"/>
</dbReference>
<dbReference type="InterPro" id="IPR040254">
    <property type="entry name" value="Ecm3-like"/>
</dbReference>
<dbReference type="InterPro" id="IPR004776">
    <property type="entry name" value="Mem_transp_PIN-like"/>
</dbReference>
<dbReference type="PANTHER" id="PTHR31274">
    <property type="entry name" value="PROTEIN ECM3"/>
    <property type="match status" value="1"/>
</dbReference>
<dbReference type="PANTHER" id="PTHR31274:SF3">
    <property type="entry name" value="PROTEIN ECM3"/>
    <property type="match status" value="1"/>
</dbReference>
<dbReference type="Pfam" id="PF03547">
    <property type="entry name" value="Mem_trans"/>
    <property type="match status" value="1"/>
</dbReference>
<organism>
    <name type="scientific">Saccharomyces cerevisiae (strain ATCC 204508 / S288c)</name>
    <name type="common">Baker's yeast</name>
    <dbReference type="NCBI Taxonomy" id="559292"/>
    <lineage>
        <taxon>Eukaryota</taxon>
        <taxon>Fungi</taxon>
        <taxon>Dikarya</taxon>
        <taxon>Ascomycota</taxon>
        <taxon>Saccharomycotina</taxon>
        <taxon>Saccharomycetes</taxon>
        <taxon>Saccharomycetales</taxon>
        <taxon>Saccharomycetaceae</taxon>
        <taxon>Saccharomyces</taxon>
    </lineage>
</organism>
<protein>
    <recommendedName>
        <fullName>Protein ECM3</fullName>
    </recommendedName>
    <alternativeName>
        <fullName>Extracellular mutant protein 3</fullName>
    </alternativeName>
</protein>
<evidence type="ECO:0000255" key="1"/>
<evidence type="ECO:0000256" key="2">
    <source>
        <dbReference type="SAM" id="MobiDB-lite"/>
    </source>
</evidence>
<evidence type="ECO:0000305" key="3"/>
<evidence type="ECO:0007744" key="4">
    <source>
    </source>
</evidence>
<keyword id="KW-0961">Cell wall biogenesis/degradation</keyword>
<keyword id="KW-0256">Endoplasmic reticulum</keyword>
<keyword id="KW-0472">Membrane</keyword>
<keyword id="KW-0597">Phosphoprotein</keyword>
<keyword id="KW-1185">Reference proteome</keyword>
<keyword id="KW-0812">Transmembrane</keyword>
<keyword id="KW-1133">Transmembrane helix</keyword>
<proteinExistence type="evidence at protein level"/>
<name>ECM3_YEAST</name>
<comment type="function">
    <text>May be involved in cell wall organization and biogenesis.</text>
</comment>
<comment type="subcellular location">
    <subcellularLocation>
        <location evidence="3">Endoplasmic reticulum membrane</location>
        <topology evidence="3">Multi-pass membrane protein</topology>
    </subcellularLocation>
</comment>
<accession>Q99252</accession>
<accession>D6W2F3</accession>